<proteinExistence type="evidence at protein level"/>
<sequence>MIKPKKLSSLMKQAVEETVPSIMVFTTTGSLLAYVSFEDPKDGLKRLDLAKRVRSIAALAGNMYSLYTATNPSPLVAESTDDVIAHQRDVLFETIIEFERGKLLIAAISIDGAEDKLYSKDPLLLGIVGTENAKEGMMQIKSELLKECITNELSTLGKPV</sequence>
<gene>
    <name type="ORF">SPBC1778.05c</name>
</gene>
<feature type="chain" id="PRO_0000116872" description="Uncharacterized protein C1778.05c">
    <location>
        <begin position="1"/>
        <end position="160"/>
    </location>
</feature>
<feature type="helix" evidence="2">
    <location>
        <begin position="4"/>
        <end position="12"/>
    </location>
</feature>
<feature type="strand" evidence="2">
    <location>
        <begin position="22"/>
        <end position="25"/>
    </location>
</feature>
<feature type="strand" evidence="2">
    <location>
        <begin position="31"/>
        <end position="34"/>
    </location>
</feature>
<feature type="helix" evidence="2">
    <location>
        <begin position="43"/>
        <end position="67"/>
    </location>
</feature>
<feature type="helix" evidence="2">
    <location>
        <begin position="73"/>
        <end position="75"/>
    </location>
</feature>
<feature type="helix" evidence="2">
    <location>
        <begin position="81"/>
        <end position="85"/>
    </location>
</feature>
<feature type="strand" evidence="2">
    <location>
        <begin position="93"/>
        <end position="100"/>
    </location>
</feature>
<feature type="strand" evidence="2">
    <location>
        <begin position="102"/>
        <end position="108"/>
    </location>
</feature>
<feature type="strand" evidence="2">
    <location>
        <begin position="123"/>
        <end position="128"/>
    </location>
</feature>
<feature type="helix" evidence="2">
    <location>
        <begin position="135"/>
        <end position="152"/>
    </location>
</feature>
<feature type="helix" evidence="2">
    <location>
        <begin position="153"/>
        <end position="155"/>
    </location>
</feature>
<protein>
    <recommendedName>
        <fullName>Uncharacterized protein C1778.05c</fullName>
    </recommendedName>
</protein>
<reference key="1">
    <citation type="journal article" date="2002" name="Nature">
        <title>The genome sequence of Schizosaccharomyces pombe.</title>
        <authorList>
            <person name="Wood V."/>
            <person name="Gwilliam R."/>
            <person name="Rajandream M.A."/>
            <person name="Lyne M.H."/>
            <person name="Lyne R."/>
            <person name="Stewart A."/>
            <person name="Sgouros J.G."/>
            <person name="Peat N."/>
            <person name="Hayles J."/>
            <person name="Baker S.G."/>
            <person name="Basham D."/>
            <person name="Bowman S."/>
            <person name="Brooks K."/>
            <person name="Brown D."/>
            <person name="Brown S."/>
            <person name="Chillingworth T."/>
            <person name="Churcher C.M."/>
            <person name="Collins M."/>
            <person name="Connor R."/>
            <person name="Cronin A."/>
            <person name="Davis P."/>
            <person name="Feltwell T."/>
            <person name="Fraser A."/>
            <person name="Gentles S."/>
            <person name="Goble A."/>
            <person name="Hamlin N."/>
            <person name="Harris D.E."/>
            <person name="Hidalgo J."/>
            <person name="Hodgson G."/>
            <person name="Holroyd S."/>
            <person name="Hornsby T."/>
            <person name="Howarth S."/>
            <person name="Huckle E.J."/>
            <person name="Hunt S."/>
            <person name="Jagels K."/>
            <person name="James K.D."/>
            <person name="Jones L."/>
            <person name="Jones M."/>
            <person name="Leather S."/>
            <person name="McDonald S."/>
            <person name="McLean J."/>
            <person name="Mooney P."/>
            <person name="Moule S."/>
            <person name="Mungall K.L."/>
            <person name="Murphy L.D."/>
            <person name="Niblett D."/>
            <person name="Odell C."/>
            <person name="Oliver K."/>
            <person name="O'Neil S."/>
            <person name="Pearson D."/>
            <person name="Quail M.A."/>
            <person name="Rabbinowitsch E."/>
            <person name="Rutherford K.M."/>
            <person name="Rutter S."/>
            <person name="Saunders D."/>
            <person name="Seeger K."/>
            <person name="Sharp S."/>
            <person name="Skelton J."/>
            <person name="Simmonds M.N."/>
            <person name="Squares R."/>
            <person name="Squares S."/>
            <person name="Stevens K."/>
            <person name="Taylor K."/>
            <person name="Taylor R.G."/>
            <person name="Tivey A."/>
            <person name="Walsh S.V."/>
            <person name="Warren T."/>
            <person name="Whitehead S."/>
            <person name="Woodward J.R."/>
            <person name="Volckaert G."/>
            <person name="Aert R."/>
            <person name="Robben J."/>
            <person name="Grymonprez B."/>
            <person name="Weltjens I."/>
            <person name="Vanstreels E."/>
            <person name="Rieger M."/>
            <person name="Schaefer M."/>
            <person name="Mueller-Auer S."/>
            <person name="Gabel C."/>
            <person name="Fuchs M."/>
            <person name="Duesterhoeft A."/>
            <person name="Fritzc C."/>
            <person name="Holzer E."/>
            <person name="Moestl D."/>
            <person name="Hilbert H."/>
            <person name="Borzym K."/>
            <person name="Langer I."/>
            <person name="Beck A."/>
            <person name="Lehrach H."/>
            <person name="Reinhardt R."/>
            <person name="Pohl T.M."/>
            <person name="Eger P."/>
            <person name="Zimmermann W."/>
            <person name="Wedler H."/>
            <person name="Wambutt R."/>
            <person name="Purnelle B."/>
            <person name="Goffeau A."/>
            <person name="Cadieu E."/>
            <person name="Dreano S."/>
            <person name="Gloux S."/>
            <person name="Lelaure V."/>
            <person name="Mottier S."/>
            <person name="Galibert F."/>
            <person name="Aves S.J."/>
            <person name="Xiang Z."/>
            <person name="Hunt C."/>
            <person name="Moore K."/>
            <person name="Hurst S.M."/>
            <person name="Lucas M."/>
            <person name="Rochet M."/>
            <person name="Gaillardin C."/>
            <person name="Tallada V.A."/>
            <person name="Garzon A."/>
            <person name="Thode G."/>
            <person name="Daga R.R."/>
            <person name="Cruzado L."/>
            <person name="Jimenez J."/>
            <person name="Sanchez M."/>
            <person name="del Rey F."/>
            <person name="Benito J."/>
            <person name="Dominguez A."/>
            <person name="Revuelta J.L."/>
            <person name="Moreno S."/>
            <person name="Armstrong J."/>
            <person name="Forsburg S.L."/>
            <person name="Cerutti L."/>
            <person name="Lowe T."/>
            <person name="McCombie W.R."/>
            <person name="Paulsen I."/>
            <person name="Potashkin J."/>
            <person name="Shpakovski G.V."/>
            <person name="Ussery D."/>
            <person name="Barrell B.G."/>
            <person name="Nurse P."/>
        </authorList>
    </citation>
    <scope>NUCLEOTIDE SEQUENCE [LARGE SCALE GENOMIC DNA]</scope>
    <source>
        <strain>972 / ATCC 24843</strain>
    </source>
</reference>
<reference key="2">
    <citation type="journal article" date="2011" name="Science">
        <title>Comparative functional genomics of the fission yeasts.</title>
        <authorList>
            <person name="Rhind N."/>
            <person name="Chen Z."/>
            <person name="Yassour M."/>
            <person name="Thompson D.A."/>
            <person name="Haas B.J."/>
            <person name="Habib N."/>
            <person name="Wapinski I."/>
            <person name="Roy S."/>
            <person name="Lin M.F."/>
            <person name="Heiman D.I."/>
            <person name="Young S.K."/>
            <person name="Furuya K."/>
            <person name="Guo Y."/>
            <person name="Pidoux A."/>
            <person name="Chen H.M."/>
            <person name="Robbertse B."/>
            <person name="Goldberg J.M."/>
            <person name="Aoki K."/>
            <person name="Bayne E.H."/>
            <person name="Berlin A.M."/>
            <person name="Desjardins C.A."/>
            <person name="Dobbs E."/>
            <person name="Dukaj L."/>
            <person name="Fan L."/>
            <person name="FitzGerald M.G."/>
            <person name="French C."/>
            <person name="Gujja S."/>
            <person name="Hansen K."/>
            <person name="Keifenheim D."/>
            <person name="Levin J.Z."/>
            <person name="Mosher R.A."/>
            <person name="Mueller C.A."/>
            <person name="Pfiffner J."/>
            <person name="Priest M."/>
            <person name="Russ C."/>
            <person name="Smialowska A."/>
            <person name="Swoboda P."/>
            <person name="Sykes S.M."/>
            <person name="Vaughn M."/>
            <person name="Vengrova S."/>
            <person name="Yoder R."/>
            <person name="Zeng Q."/>
            <person name="Allshire R."/>
            <person name="Baulcombe D."/>
            <person name="Birren B.W."/>
            <person name="Brown W."/>
            <person name="Ekwall K."/>
            <person name="Kellis M."/>
            <person name="Leatherwood J."/>
            <person name="Levin H."/>
            <person name="Margalit H."/>
            <person name="Martienssen R."/>
            <person name="Nieduszynski C.A."/>
            <person name="Spatafora J.W."/>
            <person name="Friedman N."/>
            <person name="Dalgaard J.Z."/>
            <person name="Baumann P."/>
            <person name="Niki H."/>
            <person name="Regev A."/>
            <person name="Nusbaum C."/>
        </authorList>
    </citation>
    <scope>REVISION OF GENE MODEL</scope>
</reference>
<reference key="3">
    <citation type="journal article" date="2006" name="Nat. Biotechnol.">
        <title>ORFeome cloning and global analysis of protein localization in the fission yeast Schizosaccharomyces pombe.</title>
        <authorList>
            <person name="Matsuyama A."/>
            <person name="Arai R."/>
            <person name="Yashiroda Y."/>
            <person name="Shirai A."/>
            <person name="Kamata A."/>
            <person name="Sekido S."/>
            <person name="Kobayashi Y."/>
            <person name="Hashimoto A."/>
            <person name="Hamamoto M."/>
            <person name="Hiraoka Y."/>
            <person name="Horinouchi S."/>
            <person name="Yoshida M."/>
        </authorList>
    </citation>
    <scope>SUBCELLULAR LOCATION [LARGE SCALE ANALYSIS]</scope>
</reference>
<evidence type="ECO:0000269" key="1">
    <source>
    </source>
</evidence>
<evidence type="ECO:0007829" key="2">
    <source>
        <dbReference type="PDB" id="8FW5"/>
    </source>
</evidence>
<accession>Q9Y7J2</accession>
<name>YOI5_SCHPO</name>
<organism>
    <name type="scientific">Schizosaccharomyces pombe (strain 972 / ATCC 24843)</name>
    <name type="common">Fission yeast</name>
    <dbReference type="NCBI Taxonomy" id="284812"/>
    <lineage>
        <taxon>Eukaryota</taxon>
        <taxon>Fungi</taxon>
        <taxon>Dikarya</taxon>
        <taxon>Ascomycota</taxon>
        <taxon>Taphrinomycotina</taxon>
        <taxon>Schizosaccharomycetes</taxon>
        <taxon>Schizosaccharomycetales</taxon>
        <taxon>Schizosaccharomycetaceae</taxon>
        <taxon>Schizosaccharomyces</taxon>
    </lineage>
</organism>
<dbReference type="EMBL" id="CU329671">
    <property type="protein sequence ID" value="CAB39800.2"/>
    <property type="molecule type" value="Genomic_DNA"/>
</dbReference>
<dbReference type="PIR" id="T39687">
    <property type="entry name" value="T39687"/>
</dbReference>
<dbReference type="PDB" id="8FW5">
    <property type="method" value="EM"/>
    <property type="resolution" value="3.08 A"/>
    <property type="chains" value="G=1-160"/>
</dbReference>
<dbReference type="PDBsum" id="8FW5"/>
<dbReference type="SMR" id="Q9Y7J2"/>
<dbReference type="BioGRID" id="276668">
    <property type="interactions" value="77"/>
</dbReference>
<dbReference type="STRING" id="284812.Q9Y7J2"/>
<dbReference type="iPTMnet" id="Q9Y7J2"/>
<dbReference type="PaxDb" id="4896-SPBC1778.05c.1"/>
<dbReference type="EnsemblFungi" id="SPBC1778.05c.1">
    <property type="protein sequence ID" value="SPBC1778.05c.1:pep"/>
    <property type="gene ID" value="SPBC1778.05c"/>
</dbReference>
<dbReference type="KEGG" id="spo:2540131"/>
<dbReference type="PomBase" id="SPBC1778.05c"/>
<dbReference type="VEuPathDB" id="FungiDB:SPBC1778.05c"/>
<dbReference type="HOGENOM" id="CLU_1653145_0_0_1"/>
<dbReference type="InParanoid" id="Q9Y7J2"/>
<dbReference type="OMA" id="MMQLKSE"/>
<dbReference type="Reactome" id="R-SPO-6798695">
    <property type="pathway name" value="Neutrophil degranulation"/>
</dbReference>
<dbReference type="Reactome" id="R-SPO-9639288">
    <property type="pathway name" value="Amino acids regulate mTORC1"/>
</dbReference>
<dbReference type="PRO" id="PR:Q9Y7J2"/>
<dbReference type="Proteomes" id="UP000002485">
    <property type="component" value="Chromosome II"/>
</dbReference>
<dbReference type="GO" id="GO:0005829">
    <property type="term" value="C:cytosol"/>
    <property type="evidence" value="ECO:0007005"/>
    <property type="project" value="PomBase"/>
</dbReference>
<dbReference type="GO" id="GO:0000329">
    <property type="term" value="C:fungal-type vacuole membrane"/>
    <property type="evidence" value="ECO:0000314"/>
    <property type="project" value="PomBase"/>
</dbReference>
<dbReference type="GO" id="GO:0005634">
    <property type="term" value="C:nucleus"/>
    <property type="evidence" value="ECO:0007005"/>
    <property type="project" value="PomBase"/>
</dbReference>
<dbReference type="GO" id="GO:0071986">
    <property type="term" value="C:Ragulator complex"/>
    <property type="evidence" value="ECO:0000315"/>
    <property type="project" value="PomBase"/>
</dbReference>
<dbReference type="GO" id="GO:0005085">
    <property type="term" value="F:guanyl-nucleotide exchange factor activity"/>
    <property type="evidence" value="ECO:0007669"/>
    <property type="project" value="InterPro"/>
</dbReference>
<dbReference type="GO" id="GO:0043495">
    <property type="term" value="F:protein-membrane adaptor activity"/>
    <property type="evidence" value="ECO:0000269"/>
    <property type="project" value="PomBase"/>
</dbReference>
<dbReference type="GO" id="GO:0071230">
    <property type="term" value="P:cellular response to amino acid stimulus"/>
    <property type="evidence" value="ECO:0000318"/>
    <property type="project" value="GO_Central"/>
</dbReference>
<dbReference type="GO" id="GO:1904262">
    <property type="term" value="P:negative regulation of TORC1 signaling"/>
    <property type="evidence" value="ECO:0000315"/>
    <property type="project" value="PomBase"/>
</dbReference>
<dbReference type="GO" id="GO:0032008">
    <property type="term" value="P:positive regulation of TOR signaling"/>
    <property type="evidence" value="ECO:0000318"/>
    <property type="project" value="GO_Central"/>
</dbReference>
<dbReference type="GO" id="GO:1903432">
    <property type="term" value="P:regulation of TORC1 signaling"/>
    <property type="evidence" value="ECO:0000315"/>
    <property type="project" value="PomBase"/>
</dbReference>
<dbReference type="Gene3D" id="3.30.450.30">
    <property type="entry name" value="Dynein light chain 2a, cytoplasmic"/>
    <property type="match status" value="1"/>
</dbReference>
<dbReference type="InterPro" id="IPR037587">
    <property type="entry name" value="LAMTOR2-like"/>
</dbReference>
<dbReference type="PANTHER" id="PTHR13323">
    <property type="entry name" value="LATE ENDOSOMAL/LYSOSOMAL MP1 INTERACTING PROTEIN"/>
    <property type="match status" value="1"/>
</dbReference>
<dbReference type="SUPFAM" id="SSF103196">
    <property type="entry name" value="Roadblock/LC7 domain"/>
    <property type="match status" value="1"/>
</dbReference>
<keyword id="KW-0002">3D-structure</keyword>
<keyword id="KW-0963">Cytoplasm</keyword>
<keyword id="KW-0539">Nucleus</keyword>
<keyword id="KW-1185">Reference proteome</keyword>
<comment type="subcellular location">
    <subcellularLocation>
        <location evidence="1">Cytoplasm</location>
    </subcellularLocation>
    <subcellularLocation>
        <location evidence="1">Nucleus</location>
    </subcellularLocation>
</comment>